<dbReference type="EMBL" id="CP001147">
    <property type="protein sequence ID" value="ACI20675.1"/>
    <property type="molecule type" value="Genomic_DNA"/>
</dbReference>
<dbReference type="RefSeq" id="WP_012545409.1">
    <property type="nucleotide sequence ID" value="NC_011296.1"/>
</dbReference>
<dbReference type="RefSeq" id="YP_002249549.1">
    <property type="nucleotide sequence ID" value="NC_011296.1"/>
</dbReference>
<dbReference type="SMR" id="B5YH59"/>
<dbReference type="FunCoup" id="B5YH59">
    <property type="interactions" value="534"/>
</dbReference>
<dbReference type="STRING" id="289376.THEYE_A1758"/>
<dbReference type="EnsemblBacteria" id="ACI20675">
    <property type="protein sequence ID" value="ACI20675"/>
    <property type="gene ID" value="THEYE_A1758"/>
</dbReference>
<dbReference type="KEGG" id="tye:THEYE_A1758"/>
<dbReference type="PATRIC" id="fig|289376.4.peg.1714"/>
<dbReference type="eggNOG" id="COG0443">
    <property type="taxonomic scope" value="Bacteria"/>
</dbReference>
<dbReference type="HOGENOM" id="CLU_005965_2_1_0"/>
<dbReference type="InParanoid" id="B5YH59"/>
<dbReference type="OrthoDB" id="9766019at2"/>
<dbReference type="Proteomes" id="UP000000718">
    <property type="component" value="Chromosome"/>
</dbReference>
<dbReference type="GO" id="GO:0005524">
    <property type="term" value="F:ATP binding"/>
    <property type="evidence" value="ECO:0007669"/>
    <property type="project" value="UniProtKB-UniRule"/>
</dbReference>
<dbReference type="GO" id="GO:0016887">
    <property type="term" value="F:ATP hydrolysis activity"/>
    <property type="evidence" value="ECO:0000318"/>
    <property type="project" value="GO_Central"/>
</dbReference>
<dbReference type="GO" id="GO:0140662">
    <property type="term" value="F:ATP-dependent protein folding chaperone"/>
    <property type="evidence" value="ECO:0007669"/>
    <property type="project" value="InterPro"/>
</dbReference>
<dbReference type="GO" id="GO:0031072">
    <property type="term" value="F:heat shock protein binding"/>
    <property type="evidence" value="ECO:0000318"/>
    <property type="project" value="GO_Central"/>
</dbReference>
<dbReference type="GO" id="GO:0044183">
    <property type="term" value="F:protein folding chaperone"/>
    <property type="evidence" value="ECO:0000318"/>
    <property type="project" value="GO_Central"/>
</dbReference>
<dbReference type="GO" id="GO:0051082">
    <property type="term" value="F:unfolded protein binding"/>
    <property type="evidence" value="ECO:0007669"/>
    <property type="project" value="InterPro"/>
</dbReference>
<dbReference type="GO" id="GO:0051085">
    <property type="term" value="P:chaperone cofactor-dependent protein refolding"/>
    <property type="evidence" value="ECO:0000318"/>
    <property type="project" value="GO_Central"/>
</dbReference>
<dbReference type="GO" id="GO:0042026">
    <property type="term" value="P:protein refolding"/>
    <property type="evidence" value="ECO:0000318"/>
    <property type="project" value="GO_Central"/>
</dbReference>
<dbReference type="CDD" id="cd10234">
    <property type="entry name" value="ASKHA_NBD_HSP70_DnaK-like"/>
    <property type="match status" value="1"/>
</dbReference>
<dbReference type="FunFam" id="2.60.34.10:FF:000014">
    <property type="entry name" value="Chaperone protein DnaK HSP70"/>
    <property type="match status" value="1"/>
</dbReference>
<dbReference type="FunFam" id="3.30.30.30:FF:000002">
    <property type="entry name" value="Heat shock 70 kDa protein 4"/>
    <property type="match status" value="1"/>
</dbReference>
<dbReference type="FunFam" id="1.20.1270.10:FF:000001">
    <property type="entry name" value="Molecular chaperone DnaK"/>
    <property type="match status" value="1"/>
</dbReference>
<dbReference type="FunFam" id="3.30.420.40:FF:000004">
    <property type="entry name" value="Molecular chaperone DnaK"/>
    <property type="match status" value="1"/>
</dbReference>
<dbReference type="FunFam" id="3.90.640.10:FF:000003">
    <property type="entry name" value="Molecular chaperone DnaK"/>
    <property type="match status" value="1"/>
</dbReference>
<dbReference type="Gene3D" id="1.20.1270.10">
    <property type="match status" value="1"/>
</dbReference>
<dbReference type="Gene3D" id="3.30.420.40">
    <property type="match status" value="2"/>
</dbReference>
<dbReference type="Gene3D" id="3.90.640.10">
    <property type="entry name" value="Actin, Chain A, domain 4"/>
    <property type="match status" value="1"/>
</dbReference>
<dbReference type="Gene3D" id="2.60.34.10">
    <property type="entry name" value="Substrate Binding Domain Of DNAk, Chain A, domain 1"/>
    <property type="match status" value="1"/>
</dbReference>
<dbReference type="HAMAP" id="MF_00332">
    <property type="entry name" value="DnaK"/>
    <property type="match status" value="1"/>
</dbReference>
<dbReference type="InterPro" id="IPR043129">
    <property type="entry name" value="ATPase_NBD"/>
</dbReference>
<dbReference type="InterPro" id="IPR012725">
    <property type="entry name" value="Chaperone_DnaK"/>
</dbReference>
<dbReference type="InterPro" id="IPR018181">
    <property type="entry name" value="Heat_shock_70_CS"/>
</dbReference>
<dbReference type="InterPro" id="IPR029048">
    <property type="entry name" value="HSP70_C_sf"/>
</dbReference>
<dbReference type="InterPro" id="IPR029047">
    <property type="entry name" value="HSP70_peptide-bd_sf"/>
</dbReference>
<dbReference type="InterPro" id="IPR013126">
    <property type="entry name" value="Hsp_70_fam"/>
</dbReference>
<dbReference type="NCBIfam" id="NF001413">
    <property type="entry name" value="PRK00290.1"/>
    <property type="match status" value="1"/>
</dbReference>
<dbReference type="NCBIfam" id="NF003520">
    <property type="entry name" value="PRK05183.1"/>
    <property type="match status" value="1"/>
</dbReference>
<dbReference type="NCBIfam" id="TIGR02350">
    <property type="entry name" value="prok_dnaK"/>
    <property type="match status" value="1"/>
</dbReference>
<dbReference type="PANTHER" id="PTHR19375">
    <property type="entry name" value="HEAT SHOCK PROTEIN 70KDA"/>
    <property type="match status" value="1"/>
</dbReference>
<dbReference type="Pfam" id="PF00012">
    <property type="entry name" value="HSP70"/>
    <property type="match status" value="1"/>
</dbReference>
<dbReference type="PRINTS" id="PR00301">
    <property type="entry name" value="HEATSHOCK70"/>
</dbReference>
<dbReference type="SUPFAM" id="SSF53067">
    <property type="entry name" value="Actin-like ATPase domain"/>
    <property type="match status" value="2"/>
</dbReference>
<dbReference type="SUPFAM" id="SSF100934">
    <property type="entry name" value="Heat shock protein 70kD (HSP70), C-terminal subdomain"/>
    <property type="match status" value="1"/>
</dbReference>
<dbReference type="SUPFAM" id="SSF100920">
    <property type="entry name" value="Heat shock protein 70kD (HSP70), peptide-binding domain"/>
    <property type="match status" value="1"/>
</dbReference>
<dbReference type="PROSITE" id="PS00297">
    <property type="entry name" value="HSP70_1"/>
    <property type="match status" value="1"/>
</dbReference>
<dbReference type="PROSITE" id="PS00329">
    <property type="entry name" value="HSP70_2"/>
    <property type="match status" value="1"/>
</dbReference>
<accession>B5YH59</accession>
<evidence type="ECO:0000255" key="1">
    <source>
        <dbReference type="HAMAP-Rule" id="MF_00332"/>
    </source>
</evidence>
<evidence type="ECO:0000256" key="2">
    <source>
        <dbReference type="SAM" id="MobiDB-lite"/>
    </source>
</evidence>
<name>DNAK_THEYD</name>
<comment type="function">
    <text evidence="1">Acts as a chaperone.</text>
</comment>
<comment type="induction">
    <text evidence="1">By stress conditions e.g. heat shock.</text>
</comment>
<comment type="similarity">
    <text evidence="1">Belongs to the heat shock protein 70 family.</text>
</comment>
<feature type="chain" id="PRO_1000119770" description="Chaperone protein DnaK">
    <location>
        <begin position="1"/>
        <end position="632"/>
    </location>
</feature>
<feature type="region of interest" description="Disordered" evidence="2">
    <location>
        <begin position="599"/>
        <end position="632"/>
    </location>
</feature>
<feature type="compositionally biased region" description="Polar residues" evidence="2">
    <location>
        <begin position="604"/>
        <end position="614"/>
    </location>
</feature>
<feature type="compositionally biased region" description="Acidic residues" evidence="2">
    <location>
        <begin position="620"/>
        <end position="632"/>
    </location>
</feature>
<feature type="modified residue" description="Phosphothreonine; by autocatalysis" evidence="1">
    <location>
        <position position="198"/>
    </location>
</feature>
<organism>
    <name type="scientific">Thermodesulfovibrio yellowstonii (strain ATCC 51303 / DSM 11347 / YP87)</name>
    <dbReference type="NCBI Taxonomy" id="289376"/>
    <lineage>
        <taxon>Bacteria</taxon>
        <taxon>Pseudomonadati</taxon>
        <taxon>Nitrospirota</taxon>
        <taxon>Thermodesulfovibrionia</taxon>
        <taxon>Thermodesulfovibrionales</taxon>
        <taxon>Thermodesulfovibrionaceae</taxon>
        <taxon>Thermodesulfovibrio</taxon>
    </lineage>
</organism>
<keyword id="KW-0067">ATP-binding</keyword>
<keyword id="KW-0143">Chaperone</keyword>
<keyword id="KW-0547">Nucleotide-binding</keyword>
<keyword id="KW-0597">Phosphoprotein</keyword>
<keyword id="KW-1185">Reference proteome</keyword>
<keyword id="KW-0346">Stress response</keyword>
<sequence>MGKAIGIDLGTTNSVVAVVVGGEPVVIPNQEGQRTTPSVVAFTDKGERLVGQVAKRQAITNPENTIFSIKRLMGRKYNSQEVQEAKKRLPYKIVEAPNGDAHVEIMGKRYSPPEISAMILQKLKQAAEDYLGEPVTEAVITVPAYFDDSQRQATKDAGRIAGLNVLRIINEPTAAALAYGLDKKKEEKIAVYDLGGGTFDISILEIGEGVIEVKATNGDTYLGGDDFDIRVMDWLIEEFKKQEGIDLRKDRMALQRLKEAAERAKIELSSAMETEINLPFITADASGPKHLLMKLTRAKLEQLVDDLIQKSLEPCKKALSDAGLSQSQIDEVILVGGQTRTPKVQKVVQDFFGKEPHKGVNPDEVVAVGAAIQAAILKGEVKEVLLLDVTPLSLGIETLGGVFTKIIERNTTIPTKKSQIFTTAADNQTAVTIKVYQGEREMAADNKLLGVFELVGIPPAPRGIPQIEVTFDIDANGILHVSAKDLATGKEQSIRITASSGLSEEEIKKMIREAEAHAEEDRRKKQIAEARNEADNMIYTVEKTLRDMGDRISEDERKRIEEAIEKCRRIKDTSNDVNEIKAAVEELAKASHRVAEELYKKAGASQQGAGSTTQSKKEEDVIEAEVEDKDNK</sequence>
<gene>
    <name evidence="1" type="primary">dnaK</name>
    <name type="ordered locus">THEYE_A1758</name>
</gene>
<proteinExistence type="inferred from homology"/>
<reference key="1">
    <citation type="submission" date="2008-08" db="EMBL/GenBank/DDBJ databases">
        <title>The complete genome sequence of Thermodesulfovibrio yellowstonii strain ATCC 51303 / DSM 11347 / YP87.</title>
        <authorList>
            <person name="Dodson R.J."/>
            <person name="Durkin A.S."/>
            <person name="Wu M."/>
            <person name="Eisen J."/>
            <person name="Sutton G."/>
        </authorList>
    </citation>
    <scope>NUCLEOTIDE SEQUENCE [LARGE SCALE GENOMIC DNA]</scope>
    <source>
        <strain>ATCC 51303 / DSM 11347 / YP87</strain>
    </source>
</reference>
<protein>
    <recommendedName>
        <fullName evidence="1">Chaperone protein DnaK</fullName>
    </recommendedName>
    <alternativeName>
        <fullName evidence="1">HSP70</fullName>
    </alternativeName>
    <alternativeName>
        <fullName evidence="1">Heat shock 70 kDa protein</fullName>
    </alternativeName>
    <alternativeName>
        <fullName evidence="1">Heat shock protein 70</fullName>
    </alternativeName>
</protein>